<feature type="chain" id="PRO_0000201097" description="Bacterial non-heme ferritin">
    <location>
        <begin position="1"/>
        <end position="167"/>
    </location>
</feature>
<feature type="domain" description="Ferritin-like diiron" evidence="2">
    <location>
        <begin position="1"/>
        <end position="145"/>
    </location>
</feature>
<feature type="binding site" evidence="2">
    <location>
        <position position="17"/>
    </location>
    <ligand>
        <name>Fe cation</name>
        <dbReference type="ChEBI" id="CHEBI:24875"/>
        <label>1</label>
    </ligand>
</feature>
<feature type="binding site" evidence="2">
    <location>
        <position position="50"/>
    </location>
    <ligand>
        <name>Fe cation</name>
        <dbReference type="ChEBI" id="CHEBI:24875"/>
        <label>1</label>
    </ligand>
</feature>
<feature type="binding site" evidence="2">
    <location>
        <position position="50"/>
    </location>
    <ligand>
        <name>Fe cation</name>
        <dbReference type="ChEBI" id="CHEBI:24875"/>
        <label>2</label>
    </ligand>
</feature>
<feature type="binding site" evidence="2">
    <location>
        <position position="53"/>
    </location>
    <ligand>
        <name>Fe cation</name>
        <dbReference type="ChEBI" id="CHEBI:24875"/>
        <label>1</label>
    </ligand>
</feature>
<feature type="binding site" evidence="2">
    <location>
        <position position="94"/>
    </location>
    <ligand>
        <name>Fe cation</name>
        <dbReference type="ChEBI" id="CHEBI:24875"/>
        <label>2</label>
    </ligand>
</feature>
<feature type="binding site" evidence="2">
    <location>
        <position position="127"/>
    </location>
    <ligand>
        <name>Fe cation</name>
        <dbReference type="ChEBI" id="CHEBI:24875"/>
        <label>2</label>
    </ligand>
</feature>
<feature type="helix" evidence="4">
    <location>
        <begin position="4"/>
        <end position="32"/>
    </location>
</feature>
<feature type="turn" evidence="4">
    <location>
        <begin position="33"/>
        <end position="35"/>
    </location>
</feature>
<feature type="helix" evidence="4">
    <location>
        <begin position="37"/>
        <end position="63"/>
    </location>
</feature>
<feature type="helix" evidence="4">
    <location>
        <begin position="83"/>
        <end position="110"/>
    </location>
</feature>
<feature type="helix" evidence="4">
    <location>
        <begin position="114"/>
        <end position="119"/>
    </location>
</feature>
<feature type="helix" evidence="4">
    <location>
        <begin position="121"/>
        <end position="144"/>
    </location>
</feature>
<feature type="strand" evidence="4">
    <location>
        <begin position="146"/>
        <end position="149"/>
    </location>
</feature>
<feature type="helix" evidence="4">
    <location>
        <begin position="150"/>
        <end position="165"/>
    </location>
</feature>
<comment type="function">
    <text evidence="1">Iron-storage protein.</text>
</comment>
<comment type="catalytic activity">
    <reaction>
        <text>4 Fe(2+) + O2 + 6 H2O = 4 iron(III) oxide-hydroxide + 12 H(+)</text>
        <dbReference type="Rhea" id="RHEA:11972"/>
        <dbReference type="ChEBI" id="CHEBI:15377"/>
        <dbReference type="ChEBI" id="CHEBI:15378"/>
        <dbReference type="ChEBI" id="CHEBI:15379"/>
        <dbReference type="ChEBI" id="CHEBI:29033"/>
        <dbReference type="ChEBI" id="CHEBI:78619"/>
        <dbReference type="EC" id="1.16.3.2"/>
    </reaction>
</comment>
<comment type="subunit">
    <text evidence="1">Homooligomer of 24 subunits that assemble into a spherical protein shell (12 +/- 1 nM diameter) that can sequester at least 2000 iron atoms.</text>
</comment>
<comment type="interaction">
    <interactant intactId="EBI-1210058">
        <id>Q9ZLI1</id>
    </interactant>
    <interactant intactId="EBI-1210058">
        <id>Q9ZLI1</id>
        <label>ftnA</label>
    </interactant>
    <organismsDiffer>false</organismsDiffer>
    <experiments>4</experiments>
</comment>
<comment type="subcellular location">
    <subcellularLocation>
        <location evidence="1">Cytoplasm</location>
    </subcellularLocation>
</comment>
<comment type="similarity">
    <text evidence="3">Belongs to the ferritin family. Prokaryotic subfamily.</text>
</comment>
<organism>
    <name type="scientific">Helicobacter pylori (strain J99 / ATCC 700824)</name>
    <name type="common">Campylobacter pylori J99</name>
    <dbReference type="NCBI Taxonomy" id="85963"/>
    <lineage>
        <taxon>Bacteria</taxon>
        <taxon>Pseudomonadati</taxon>
        <taxon>Campylobacterota</taxon>
        <taxon>Epsilonproteobacteria</taxon>
        <taxon>Campylobacterales</taxon>
        <taxon>Helicobacteraceae</taxon>
        <taxon>Helicobacter</taxon>
    </lineage>
</organism>
<name>FTN_HELPJ</name>
<dbReference type="EC" id="1.16.3.2"/>
<dbReference type="EMBL" id="AE001439">
    <property type="protein sequence ID" value="AAD06160.1"/>
    <property type="molecule type" value="Genomic_DNA"/>
</dbReference>
<dbReference type="PIR" id="D71914">
    <property type="entry name" value="D71914"/>
</dbReference>
<dbReference type="RefSeq" id="WP_000949190.1">
    <property type="nucleotide sequence ID" value="NZ_CP011330.1"/>
</dbReference>
<dbReference type="PDB" id="3BVE">
    <property type="method" value="X-ray"/>
    <property type="resolution" value="1.80 A"/>
    <property type="chains" value="A/B/C/D/E/F=1-167"/>
</dbReference>
<dbReference type="PDB" id="3BVF">
    <property type="method" value="X-ray"/>
    <property type="resolution" value="1.50 A"/>
    <property type="chains" value="A/B/C/D/E/F=1-167"/>
</dbReference>
<dbReference type="PDB" id="3BVI">
    <property type="method" value="X-ray"/>
    <property type="resolution" value="2.00 A"/>
    <property type="chains" value="A/B/C/D/E/F=1-167"/>
</dbReference>
<dbReference type="PDB" id="3BVK">
    <property type="method" value="X-ray"/>
    <property type="resolution" value="1.50 A"/>
    <property type="chains" value="A/B/C/D/E/F=1-167"/>
</dbReference>
<dbReference type="PDB" id="3BVL">
    <property type="method" value="X-ray"/>
    <property type="resolution" value="1.80 A"/>
    <property type="chains" value="A/B/C/D/E/F=1-167"/>
</dbReference>
<dbReference type="PDB" id="3EGM">
    <property type="method" value="X-ray"/>
    <property type="resolution" value="2.10 A"/>
    <property type="chains" value="A/B/C/D/E/F=1-167"/>
</dbReference>
<dbReference type="PDB" id="5C6F">
    <property type="method" value="X-ray"/>
    <property type="resolution" value="2.00 A"/>
    <property type="chains" value="A/B/C/D/E/F/G/H/I/J/K/L=1-167"/>
</dbReference>
<dbReference type="PDBsum" id="3BVE"/>
<dbReference type="PDBsum" id="3BVF"/>
<dbReference type="PDBsum" id="3BVI"/>
<dbReference type="PDBsum" id="3BVK"/>
<dbReference type="PDBsum" id="3BVL"/>
<dbReference type="PDBsum" id="3EGM"/>
<dbReference type="PDBsum" id="5C6F"/>
<dbReference type="SASBDB" id="Q9ZLI1"/>
<dbReference type="SMR" id="Q9ZLI1"/>
<dbReference type="DIP" id="DIP-45565N"/>
<dbReference type="KEGG" id="hpj:jhp_0598"/>
<dbReference type="PATRIC" id="fig|85963.30.peg.387"/>
<dbReference type="eggNOG" id="COG1528">
    <property type="taxonomic scope" value="Bacteria"/>
</dbReference>
<dbReference type="EvolutionaryTrace" id="Q9ZLI1"/>
<dbReference type="Proteomes" id="UP000000804">
    <property type="component" value="Chromosome"/>
</dbReference>
<dbReference type="GO" id="GO:0005829">
    <property type="term" value="C:cytosol"/>
    <property type="evidence" value="ECO:0007669"/>
    <property type="project" value="TreeGrafter"/>
</dbReference>
<dbReference type="GO" id="GO:0008199">
    <property type="term" value="F:ferric iron binding"/>
    <property type="evidence" value="ECO:0007669"/>
    <property type="project" value="InterPro"/>
</dbReference>
<dbReference type="GO" id="GO:0008198">
    <property type="term" value="F:ferrous iron binding"/>
    <property type="evidence" value="ECO:0007669"/>
    <property type="project" value="TreeGrafter"/>
</dbReference>
<dbReference type="GO" id="GO:0004322">
    <property type="term" value="F:ferroxidase activity"/>
    <property type="evidence" value="ECO:0007669"/>
    <property type="project" value="TreeGrafter"/>
</dbReference>
<dbReference type="GO" id="GO:0042802">
    <property type="term" value="F:identical protein binding"/>
    <property type="evidence" value="ECO:0000353"/>
    <property type="project" value="IntAct"/>
</dbReference>
<dbReference type="GO" id="GO:0006879">
    <property type="term" value="P:intracellular iron ion homeostasis"/>
    <property type="evidence" value="ECO:0007669"/>
    <property type="project" value="UniProtKB-KW"/>
</dbReference>
<dbReference type="GO" id="GO:0006826">
    <property type="term" value="P:iron ion transport"/>
    <property type="evidence" value="ECO:0007669"/>
    <property type="project" value="InterPro"/>
</dbReference>
<dbReference type="CDD" id="cd01055">
    <property type="entry name" value="Nonheme_Ferritin"/>
    <property type="match status" value="1"/>
</dbReference>
<dbReference type="FunFam" id="1.20.1260.10:FF:000001">
    <property type="entry name" value="Non-heme ferritin"/>
    <property type="match status" value="1"/>
</dbReference>
<dbReference type="Gene3D" id="1.20.1260.10">
    <property type="match status" value="1"/>
</dbReference>
<dbReference type="InterPro" id="IPR001519">
    <property type="entry name" value="Ferritin"/>
</dbReference>
<dbReference type="InterPro" id="IPR012347">
    <property type="entry name" value="Ferritin-like"/>
</dbReference>
<dbReference type="InterPro" id="IPR009040">
    <property type="entry name" value="Ferritin-like_diiron"/>
</dbReference>
<dbReference type="InterPro" id="IPR009078">
    <property type="entry name" value="Ferritin-like_SF"/>
</dbReference>
<dbReference type="InterPro" id="IPR008331">
    <property type="entry name" value="Ferritin_DPS_dom"/>
</dbReference>
<dbReference type="InterPro" id="IPR041719">
    <property type="entry name" value="Ferritin_prok"/>
</dbReference>
<dbReference type="PANTHER" id="PTHR11431:SF127">
    <property type="entry name" value="BACTERIAL NON-HEME FERRITIN"/>
    <property type="match status" value="1"/>
</dbReference>
<dbReference type="PANTHER" id="PTHR11431">
    <property type="entry name" value="FERRITIN"/>
    <property type="match status" value="1"/>
</dbReference>
<dbReference type="Pfam" id="PF00210">
    <property type="entry name" value="Ferritin"/>
    <property type="match status" value="1"/>
</dbReference>
<dbReference type="SUPFAM" id="SSF47240">
    <property type="entry name" value="Ferritin-like"/>
    <property type="match status" value="1"/>
</dbReference>
<dbReference type="PROSITE" id="PS50905">
    <property type="entry name" value="FERRITIN_LIKE"/>
    <property type="match status" value="1"/>
</dbReference>
<evidence type="ECO:0000250" key="1"/>
<evidence type="ECO:0000255" key="2">
    <source>
        <dbReference type="PROSITE-ProRule" id="PRU00085"/>
    </source>
</evidence>
<evidence type="ECO:0000305" key="3"/>
<evidence type="ECO:0007829" key="4">
    <source>
        <dbReference type="PDB" id="3BVF"/>
    </source>
</evidence>
<accession>Q9ZLI1</accession>
<protein>
    <recommendedName>
        <fullName>Bacterial non-heme ferritin</fullName>
        <ecNumber>1.16.3.2</ecNumber>
    </recommendedName>
</protein>
<reference key="1">
    <citation type="journal article" date="1999" name="Nature">
        <title>Genomic sequence comparison of two unrelated isolates of the human gastric pathogen Helicobacter pylori.</title>
        <authorList>
            <person name="Alm R.A."/>
            <person name="Ling L.-S.L."/>
            <person name="Moir D.T."/>
            <person name="King B.L."/>
            <person name="Brown E.D."/>
            <person name="Doig P.C."/>
            <person name="Smith D.R."/>
            <person name="Noonan B."/>
            <person name="Guild B.C."/>
            <person name="deJonge B.L."/>
            <person name="Carmel G."/>
            <person name="Tummino P.J."/>
            <person name="Caruso A."/>
            <person name="Uria-Nickelsen M."/>
            <person name="Mills D.M."/>
            <person name="Ives C."/>
            <person name="Gibson R."/>
            <person name="Merberg D."/>
            <person name="Mills S.D."/>
            <person name="Jiang Q."/>
            <person name="Taylor D.E."/>
            <person name="Vovis G.F."/>
            <person name="Trust T.J."/>
        </authorList>
    </citation>
    <scope>NUCLEOTIDE SEQUENCE [LARGE SCALE GENOMIC DNA]</scope>
    <source>
        <strain>J99 / ATCC 700824</strain>
    </source>
</reference>
<gene>
    <name type="primary">ftnA</name>
    <name type="synonym">pfr</name>
    <name type="ordered locus">jhp_0598</name>
</gene>
<keyword id="KW-0002">3D-structure</keyword>
<keyword id="KW-0963">Cytoplasm</keyword>
<keyword id="KW-0408">Iron</keyword>
<keyword id="KW-0409">Iron storage</keyword>
<keyword id="KW-0479">Metal-binding</keyword>
<keyword id="KW-0560">Oxidoreductase</keyword>
<sequence>MLSKDIIKLLNEQVNKEMNSSNLYMSMSSWCYTHSLDGAGLFLFDHAAEEYEHAKKLIIFLNENNVPVQLTSISAPEHKFEGLTQIFQKAYEHEQHISESINNIVDHAIKSKDHATFNFLQWYVAEQHEEEVLFKDILDKIELIGNENHGLYLADQYVKGIAKSRKS</sequence>
<proteinExistence type="evidence at protein level"/>